<protein>
    <recommendedName>
        <fullName evidence="1">Bifunctional uridylyltransferase/uridylyl-removing enzyme</fullName>
        <shortName evidence="1">UTase/UR</shortName>
    </recommendedName>
    <alternativeName>
        <fullName evidence="1">Bifunctional [protein-PII] modification enzyme</fullName>
    </alternativeName>
    <alternativeName>
        <fullName evidence="1">Bifunctional nitrogen sensor protein</fullName>
    </alternativeName>
    <domain>
        <recommendedName>
            <fullName evidence="1">[Protein-PII] uridylyltransferase</fullName>
            <shortName evidence="1">PII uridylyltransferase</shortName>
            <shortName evidence="1">UTase</shortName>
            <ecNumber evidence="1">2.7.7.59</ecNumber>
        </recommendedName>
    </domain>
    <domain>
        <recommendedName>
            <fullName evidence="1">[Protein-PII]-UMP uridylyl-removing enzyme</fullName>
            <shortName evidence="1">UR</shortName>
            <ecNumber evidence="1">3.1.4.-</ecNumber>
        </recommendedName>
    </domain>
</protein>
<organism>
    <name type="scientific">Legionella pneumophila (strain Paris)</name>
    <dbReference type="NCBI Taxonomy" id="297246"/>
    <lineage>
        <taxon>Bacteria</taxon>
        <taxon>Pseudomonadati</taxon>
        <taxon>Pseudomonadota</taxon>
        <taxon>Gammaproteobacteria</taxon>
        <taxon>Legionellales</taxon>
        <taxon>Legionellaceae</taxon>
        <taxon>Legionella</taxon>
    </lineage>
</organism>
<accession>Q5X4J1</accession>
<reference key="1">
    <citation type="journal article" date="2004" name="Nat. Genet.">
        <title>Evidence in the Legionella pneumophila genome for exploitation of host cell functions and high genome plasticity.</title>
        <authorList>
            <person name="Cazalet C."/>
            <person name="Rusniok C."/>
            <person name="Brueggemann H."/>
            <person name="Zidane N."/>
            <person name="Magnier A."/>
            <person name="Ma L."/>
            <person name="Tichit M."/>
            <person name="Jarraud S."/>
            <person name="Bouchier C."/>
            <person name="Vandenesch F."/>
            <person name="Kunst F."/>
            <person name="Etienne J."/>
            <person name="Glaser P."/>
            <person name="Buchrieser C."/>
        </authorList>
    </citation>
    <scope>NUCLEOTIDE SEQUENCE [LARGE SCALE GENOMIC DNA]</scope>
    <source>
        <strain>Paris</strain>
    </source>
</reference>
<comment type="function">
    <text evidence="1">Modifies, by uridylylation and deuridylylation, the PII regulatory proteins (GlnB and homologs), in response to the nitrogen status of the cell that GlnD senses through the glutamine level. Under low glutamine levels, catalyzes the conversion of the PII proteins and UTP to PII-UMP and PPi, while under higher glutamine levels, GlnD hydrolyzes PII-UMP to PII and UMP (deuridylylation). Thus, controls uridylylation state and activity of the PII proteins, and plays an important role in the regulation of nitrogen assimilation and metabolism.</text>
</comment>
<comment type="catalytic activity">
    <reaction evidence="1">
        <text>[protein-PII]-L-tyrosine + UTP = [protein-PII]-uridylyl-L-tyrosine + diphosphate</text>
        <dbReference type="Rhea" id="RHEA:13673"/>
        <dbReference type="Rhea" id="RHEA-COMP:12147"/>
        <dbReference type="Rhea" id="RHEA-COMP:12148"/>
        <dbReference type="ChEBI" id="CHEBI:33019"/>
        <dbReference type="ChEBI" id="CHEBI:46398"/>
        <dbReference type="ChEBI" id="CHEBI:46858"/>
        <dbReference type="ChEBI" id="CHEBI:90602"/>
        <dbReference type="EC" id="2.7.7.59"/>
    </reaction>
</comment>
<comment type="catalytic activity">
    <reaction evidence="1">
        <text>[protein-PII]-uridylyl-L-tyrosine + H2O = [protein-PII]-L-tyrosine + UMP + H(+)</text>
        <dbReference type="Rhea" id="RHEA:48600"/>
        <dbReference type="Rhea" id="RHEA-COMP:12147"/>
        <dbReference type="Rhea" id="RHEA-COMP:12148"/>
        <dbReference type="ChEBI" id="CHEBI:15377"/>
        <dbReference type="ChEBI" id="CHEBI:15378"/>
        <dbReference type="ChEBI" id="CHEBI:46858"/>
        <dbReference type="ChEBI" id="CHEBI:57865"/>
        <dbReference type="ChEBI" id="CHEBI:90602"/>
    </reaction>
</comment>
<comment type="cofactor">
    <cofactor evidence="1">
        <name>Mg(2+)</name>
        <dbReference type="ChEBI" id="CHEBI:18420"/>
    </cofactor>
</comment>
<comment type="activity regulation">
    <text evidence="1">Uridylyltransferase (UTase) activity is inhibited by glutamine, while glutamine activates uridylyl-removing (UR) activity.</text>
</comment>
<comment type="domain">
    <text evidence="1">Has four distinct domains: an N-terminal nucleotidyltransferase (NT) domain responsible for UTase activity, a central HD domain that encodes UR activity, and two C-terminal ACT domains that seem to have a role in glutamine sensing.</text>
</comment>
<comment type="similarity">
    <text evidence="1">Belongs to the GlnD family.</text>
</comment>
<gene>
    <name evidence="1" type="primary">glnD</name>
    <name type="ordered locus">lpp1685</name>
</gene>
<sequence length="861" mass="100698">MKNDNRIIKNTIKQFKEKLCKDFSQKANITSITRKLAVFIDTILIQLFIKNKLHFGDNFCLLALGSYGRRELQLHSDIDLLILHTEKVSNIQLQRAQKFIQDCWDVGLEVSHQITTVSSCANLASQDLSVISTIMDMFLLCGHGALMEELIYQTHTLHMWPSHQYFFAKLQEQQNRYAKYGETAYNLEPNIKNGPGGLRDLQILLSISKRHFKIKKLAEGIGYGFITDKEYEELKYCQNFLWRVRFALHMLAGKPEERLSFDYQVKLAQFFGYQDQSHILAIEQFMKDYFKVIKRNRELNEMLLQWFNETIVYHQKQKIIRLDDEFQLSNRFIEVRNNRVFKQNPQSILKLFYWLVKRPDIEGVRASTIRLIRESLFLMGKRFRESKETANIFINIFRTGNDPYDALQRMNRYGVLAHYLDCFATVTGQMQYDLFHAYTVDQHTLFVIRNISRFKKNEYAKQFPLCAKIISALEKPEILYLGALFHDIAKGRGGDHSELGAIEAQQFTQRHYMEAEDSKLIVWLVRYHLLMSQTAQRKDIYDPKTIEQFCQLLPHARYLDYLYLLTVADICGTNPTLWNAWKDSLLKELYHAAKTRLHKQQELLDEAALISIRKQYAMDILISDGISSRVIQDLWSQFKGKYFLHESPEVIARHTKAILNSKQFPVVIIMPHHSQGGTEVFIYMPHKDERFTITTSVLSNHHVTIQEAAIITCDNQFDLDTYIILDENNQAFLNEQRARDIQKSLCDHLANTGRLPAVSRRRLSRALTHFNVKTQINFIDDNTNHQTQLFLVTNDRPGLLATISRVFLTLNIHLHNAKIATAGERVEDMFYISNQTGYSLNHEEKTILKEKLILEISKSKY</sequence>
<feature type="chain" id="PRO_0000192741" description="Bifunctional uridylyltransferase/uridylyl-removing enzyme">
    <location>
        <begin position="1"/>
        <end position="861"/>
    </location>
</feature>
<feature type="domain" description="HD" evidence="2">
    <location>
        <begin position="440"/>
        <end position="562"/>
    </location>
</feature>
<feature type="domain" description="ACT 1" evidence="1">
    <location>
        <begin position="679"/>
        <end position="760"/>
    </location>
</feature>
<feature type="domain" description="ACT 2" evidence="1">
    <location>
        <begin position="788"/>
        <end position="861"/>
    </location>
</feature>
<feature type="region of interest" description="Uridylyltransferase">
    <location>
        <begin position="1"/>
        <end position="321"/>
    </location>
</feature>
<feature type="region of interest" description="Uridylyl-removing">
    <location>
        <begin position="322"/>
        <end position="678"/>
    </location>
</feature>
<name>GLND_LEGPA</name>
<dbReference type="EC" id="2.7.7.59" evidence="1"/>
<dbReference type="EC" id="3.1.4.-" evidence="1"/>
<dbReference type="EMBL" id="CR628336">
    <property type="protein sequence ID" value="CAH12837.1"/>
    <property type="molecule type" value="Genomic_DNA"/>
</dbReference>
<dbReference type="RefSeq" id="WP_011213990.1">
    <property type="nucleotide sequence ID" value="NC_006368.1"/>
</dbReference>
<dbReference type="SMR" id="Q5X4J1"/>
<dbReference type="KEGG" id="lpp:lpp1685"/>
<dbReference type="LegioList" id="lpp1685"/>
<dbReference type="HOGENOM" id="CLU_012833_1_0_6"/>
<dbReference type="GO" id="GO:0008773">
    <property type="term" value="F:[protein-PII] uridylyltransferase activity"/>
    <property type="evidence" value="ECO:0007669"/>
    <property type="project" value="UniProtKB-UniRule"/>
</dbReference>
<dbReference type="GO" id="GO:0008081">
    <property type="term" value="F:phosphoric diester hydrolase activity"/>
    <property type="evidence" value="ECO:0007669"/>
    <property type="project" value="UniProtKB-UniRule"/>
</dbReference>
<dbReference type="GO" id="GO:0006808">
    <property type="term" value="P:regulation of nitrogen utilization"/>
    <property type="evidence" value="ECO:0007669"/>
    <property type="project" value="UniProtKB-UniRule"/>
</dbReference>
<dbReference type="CDD" id="cd04899">
    <property type="entry name" value="ACT_ACR-UUR-like_2"/>
    <property type="match status" value="1"/>
</dbReference>
<dbReference type="CDD" id="cd04900">
    <property type="entry name" value="ACT_UUR-like_1"/>
    <property type="match status" value="1"/>
</dbReference>
<dbReference type="CDD" id="cd00077">
    <property type="entry name" value="HDc"/>
    <property type="match status" value="1"/>
</dbReference>
<dbReference type="CDD" id="cd05401">
    <property type="entry name" value="NT_GlnE_GlnD_like"/>
    <property type="match status" value="1"/>
</dbReference>
<dbReference type="Gene3D" id="3.30.460.10">
    <property type="entry name" value="Beta Polymerase, domain 2"/>
    <property type="match status" value="1"/>
</dbReference>
<dbReference type="Gene3D" id="1.10.3210.10">
    <property type="entry name" value="Hypothetical protein af1432"/>
    <property type="match status" value="1"/>
</dbReference>
<dbReference type="HAMAP" id="MF_00277">
    <property type="entry name" value="PII_uridylyl_transf"/>
    <property type="match status" value="1"/>
</dbReference>
<dbReference type="InterPro" id="IPR045865">
    <property type="entry name" value="ACT-like_dom_sf"/>
</dbReference>
<dbReference type="InterPro" id="IPR002912">
    <property type="entry name" value="ACT_dom"/>
</dbReference>
<dbReference type="InterPro" id="IPR005105">
    <property type="entry name" value="GlnD_Uridyltrans_N"/>
</dbReference>
<dbReference type="InterPro" id="IPR003607">
    <property type="entry name" value="HD/PDEase_dom"/>
</dbReference>
<dbReference type="InterPro" id="IPR006674">
    <property type="entry name" value="HD_domain"/>
</dbReference>
<dbReference type="InterPro" id="IPR043519">
    <property type="entry name" value="NT_sf"/>
</dbReference>
<dbReference type="InterPro" id="IPR013546">
    <property type="entry name" value="PII_UdlTrfase/GS_AdlTrfase"/>
</dbReference>
<dbReference type="InterPro" id="IPR010043">
    <property type="entry name" value="UTase/UR"/>
</dbReference>
<dbReference type="NCBIfam" id="TIGR01693">
    <property type="entry name" value="UTase_glnD"/>
    <property type="match status" value="1"/>
</dbReference>
<dbReference type="PANTHER" id="PTHR47320">
    <property type="entry name" value="BIFUNCTIONAL URIDYLYLTRANSFERASE/URIDYLYL-REMOVING ENZYME"/>
    <property type="match status" value="1"/>
</dbReference>
<dbReference type="PANTHER" id="PTHR47320:SF1">
    <property type="entry name" value="BIFUNCTIONAL URIDYLYLTRANSFERASE_URIDYLYL-REMOVING ENZYME"/>
    <property type="match status" value="1"/>
</dbReference>
<dbReference type="Pfam" id="PF03445">
    <property type="entry name" value="DUF294"/>
    <property type="match status" value="1"/>
</dbReference>
<dbReference type="Pfam" id="PF08335">
    <property type="entry name" value="GlnD_UR_UTase"/>
    <property type="match status" value="1"/>
</dbReference>
<dbReference type="Pfam" id="PF01966">
    <property type="entry name" value="HD"/>
    <property type="match status" value="1"/>
</dbReference>
<dbReference type="PIRSF" id="PIRSF006288">
    <property type="entry name" value="PII_uridyltransf"/>
    <property type="match status" value="1"/>
</dbReference>
<dbReference type="SMART" id="SM00471">
    <property type="entry name" value="HDc"/>
    <property type="match status" value="1"/>
</dbReference>
<dbReference type="SUPFAM" id="SSF55021">
    <property type="entry name" value="ACT-like"/>
    <property type="match status" value="1"/>
</dbReference>
<dbReference type="SUPFAM" id="SSF109604">
    <property type="entry name" value="HD-domain/PDEase-like"/>
    <property type="match status" value="1"/>
</dbReference>
<dbReference type="SUPFAM" id="SSF81301">
    <property type="entry name" value="Nucleotidyltransferase"/>
    <property type="match status" value="1"/>
</dbReference>
<dbReference type="SUPFAM" id="SSF81593">
    <property type="entry name" value="Nucleotidyltransferase substrate binding subunit/domain"/>
    <property type="match status" value="1"/>
</dbReference>
<dbReference type="PROSITE" id="PS51671">
    <property type="entry name" value="ACT"/>
    <property type="match status" value="2"/>
</dbReference>
<dbReference type="PROSITE" id="PS51831">
    <property type="entry name" value="HD"/>
    <property type="match status" value="1"/>
</dbReference>
<keyword id="KW-0378">Hydrolase</keyword>
<keyword id="KW-0460">Magnesium</keyword>
<keyword id="KW-0511">Multifunctional enzyme</keyword>
<keyword id="KW-0548">Nucleotidyltransferase</keyword>
<keyword id="KW-0677">Repeat</keyword>
<keyword id="KW-0808">Transferase</keyword>
<proteinExistence type="inferred from homology"/>
<evidence type="ECO:0000255" key="1">
    <source>
        <dbReference type="HAMAP-Rule" id="MF_00277"/>
    </source>
</evidence>
<evidence type="ECO:0000255" key="2">
    <source>
        <dbReference type="PROSITE-ProRule" id="PRU01175"/>
    </source>
</evidence>